<keyword id="KW-0067">ATP-binding</keyword>
<keyword id="KW-0436">Ligase</keyword>
<keyword id="KW-0547">Nucleotide-binding</keyword>
<keyword id="KW-0648">Protein biosynthesis</keyword>
<reference key="1">
    <citation type="journal article" date="2010" name="Appl. Environ. Microbiol.">
        <title>Conserved symbiotic plasmid DNA sequences in the multireplicon pangenomic structure of Rhizobium etli.</title>
        <authorList>
            <person name="Gonzalez V."/>
            <person name="Acosta J.L."/>
            <person name="Santamaria R.I."/>
            <person name="Bustos P."/>
            <person name="Fernandez J.L."/>
            <person name="Hernandez Gonzalez I.L."/>
            <person name="Diaz R."/>
            <person name="Flores M."/>
            <person name="Palacios R."/>
            <person name="Mora J."/>
            <person name="Davila G."/>
        </authorList>
    </citation>
    <scope>NUCLEOTIDE SEQUENCE [LARGE SCALE GENOMIC DNA]</scope>
    <source>
        <strain>CIAT 652</strain>
    </source>
</reference>
<gene>
    <name evidence="1" type="primary">gatC</name>
    <name type="ordered locus">RHECIAT_CH0001942</name>
</gene>
<sequence length="95" mass="10142">MSVDLATVKRVAKLARIAVSEDEANRMVGELNGILGFVEQLSEVNVEGVEAMTSVTPMAMKKRADAVTDGNKAADIVANAPVTDHNFFLVPKVVE</sequence>
<accession>B3PXX2</accession>
<evidence type="ECO:0000255" key="1">
    <source>
        <dbReference type="HAMAP-Rule" id="MF_00122"/>
    </source>
</evidence>
<proteinExistence type="inferred from homology"/>
<feature type="chain" id="PRO_1000095310" description="Aspartyl/glutamyl-tRNA(Asn/Gln) amidotransferase subunit C">
    <location>
        <begin position="1"/>
        <end position="95"/>
    </location>
</feature>
<organism>
    <name type="scientific">Rhizobium etli (strain CIAT 652)</name>
    <dbReference type="NCBI Taxonomy" id="491916"/>
    <lineage>
        <taxon>Bacteria</taxon>
        <taxon>Pseudomonadati</taxon>
        <taxon>Pseudomonadota</taxon>
        <taxon>Alphaproteobacteria</taxon>
        <taxon>Hyphomicrobiales</taxon>
        <taxon>Rhizobiaceae</taxon>
        <taxon>Rhizobium/Agrobacterium group</taxon>
        <taxon>Rhizobium</taxon>
    </lineage>
</organism>
<protein>
    <recommendedName>
        <fullName evidence="1">Aspartyl/glutamyl-tRNA(Asn/Gln) amidotransferase subunit C</fullName>
        <shortName evidence="1">Asp/Glu-ADT subunit C</shortName>
        <ecNumber evidence="1">6.3.5.-</ecNumber>
    </recommendedName>
</protein>
<dbReference type="EC" id="6.3.5.-" evidence="1"/>
<dbReference type="EMBL" id="CP001074">
    <property type="protein sequence ID" value="ACE90908.1"/>
    <property type="molecule type" value="Genomic_DNA"/>
</dbReference>
<dbReference type="SMR" id="B3PXX2"/>
<dbReference type="KEGG" id="rec:RHECIAT_CH0001942"/>
<dbReference type="eggNOG" id="COG0721">
    <property type="taxonomic scope" value="Bacteria"/>
</dbReference>
<dbReference type="HOGENOM" id="CLU_105899_2_0_5"/>
<dbReference type="Proteomes" id="UP000008817">
    <property type="component" value="Chromosome"/>
</dbReference>
<dbReference type="GO" id="GO:0050566">
    <property type="term" value="F:asparaginyl-tRNA synthase (glutamine-hydrolyzing) activity"/>
    <property type="evidence" value="ECO:0007669"/>
    <property type="project" value="RHEA"/>
</dbReference>
<dbReference type="GO" id="GO:0005524">
    <property type="term" value="F:ATP binding"/>
    <property type="evidence" value="ECO:0007669"/>
    <property type="project" value="UniProtKB-KW"/>
</dbReference>
<dbReference type="GO" id="GO:0050567">
    <property type="term" value="F:glutaminyl-tRNA synthase (glutamine-hydrolyzing) activity"/>
    <property type="evidence" value="ECO:0007669"/>
    <property type="project" value="UniProtKB-UniRule"/>
</dbReference>
<dbReference type="GO" id="GO:0070681">
    <property type="term" value="P:glutaminyl-tRNAGln biosynthesis via transamidation"/>
    <property type="evidence" value="ECO:0007669"/>
    <property type="project" value="TreeGrafter"/>
</dbReference>
<dbReference type="GO" id="GO:0006450">
    <property type="term" value="P:regulation of translational fidelity"/>
    <property type="evidence" value="ECO:0007669"/>
    <property type="project" value="InterPro"/>
</dbReference>
<dbReference type="GO" id="GO:0006412">
    <property type="term" value="P:translation"/>
    <property type="evidence" value="ECO:0007669"/>
    <property type="project" value="UniProtKB-UniRule"/>
</dbReference>
<dbReference type="Gene3D" id="1.10.20.60">
    <property type="entry name" value="Glu-tRNAGln amidotransferase C subunit, N-terminal domain"/>
    <property type="match status" value="1"/>
</dbReference>
<dbReference type="HAMAP" id="MF_00122">
    <property type="entry name" value="GatC"/>
    <property type="match status" value="1"/>
</dbReference>
<dbReference type="InterPro" id="IPR036113">
    <property type="entry name" value="Asp/Glu-ADT_sf_sub_c"/>
</dbReference>
<dbReference type="InterPro" id="IPR003837">
    <property type="entry name" value="GatC"/>
</dbReference>
<dbReference type="NCBIfam" id="TIGR00135">
    <property type="entry name" value="gatC"/>
    <property type="match status" value="1"/>
</dbReference>
<dbReference type="PANTHER" id="PTHR15004">
    <property type="entry name" value="GLUTAMYL-TRNA(GLN) AMIDOTRANSFERASE SUBUNIT C, MITOCHONDRIAL"/>
    <property type="match status" value="1"/>
</dbReference>
<dbReference type="PANTHER" id="PTHR15004:SF0">
    <property type="entry name" value="GLUTAMYL-TRNA(GLN) AMIDOTRANSFERASE SUBUNIT C, MITOCHONDRIAL"/>
    <property type="match status" value="1"/>
</dbReference>
<dbReference type="Pfam" id="PF02686">
    <property type="entry name" value="GatC"/>
    <property type="match status" value="1"/>
</dbReference>
<dbReference type="SUPFAM" id="SSF141000">
    <property type="entry name" value="Glu-tRNAGln amidotransferase C subunit"/>
    <property type="match status" value="1"/>
</dbReference>
<comment type="function">
    <text evidence="1">Allows the formation of correctly charged Asn-tRNA(Asn) or Gln-tRNA(Gln) through the transamidation of misacylated Asp-tRNA(Asn) or Glu-tRNA(Gln) in organisms which lack either or both of asparaginyl-tRNA or glutaminyl-tRNA synthetases. The reaction takes place in the presence of glutamine and ATP through an activated phospho-Asp-tRNA(Asn) or phospho-Glu-tRNA(Gln).</text>
</comment>
<comment type="catalytic activity">
    <reaction evidence="1">
        <text>L-glutamyl-tRNA(Gln) + L-glutamine + ATP + H2O = L-glutaminyl-tRNA(Gln) + L-glutamate + ADP + phosphate + H(+)</text>
        <dbReference type="Rhea" id="RHEA:17521"/>
        <dbReference type="Rhea" id="RHEA-COMP:9681"/>
        <dbReference type="Rhea" id="RHEA-COMP:9684"/>
        <dbReference type="ChEBI" id="CHEBI:15377"/>
        <dbReference type="ChEBI" id="CHEBI:15378"/>
        <dbReference type="ChEBI" id="CHEBI:29985"/>
        <dbReference type="ChEBI" id="CHEBI:30616"/>
        <dbReference type="ChEBI" id="CHEBI:43474"/>
        <dbReference type="ChEBI" id="CHEBI:58359"/>
        <dbReference type="ChEBI" id="CHEBI:78520"/>
        <dbReference type="ChEBI" id="CHEBI:78521"/>
        <dbReference type="ChEBI" id="CHEBI:456216"/>
    </reaction>
</comment>
<comment type="catalytic activity">
    <reaction evidence="1">
        <text>L-aspartyl-tRNA(Asn) + L-glutamine + ATP + H2O = L-asparaginyl-tRNA(Asn) + L-glutamate + ADP + phosphate + 2 H(+)</text>
        <dbReference type="Rhea" id="RHEA:14513"/>
        <dbReference type="Rhea" id="RHEA-COMP:9674"/>
        <dbReference type="Rhea" id="RHEA-COMP:9677"/>
        <dbReference type="ChEBI" id="CHEBI:15377"/>
        <dbReference type="ChEBI" id="CHEBI:15378"/>
        <dbReference type="ChEBI" id="CHEBI:29985"/>
        <dbReference type="ChEBI" id="CHEBI:30616"/>
        <dbReference type="ChEBI" id="CHEBI:43474"/>
        <dbReference type="ChEBI" id="CHEBI:58359"/>
        <dbReference type="ChEBI" id="CHEBI:78515"/>
        <dbReference type="ChEBI" id="CHEBI:78516"/>
        <dbReference type="ChEBI" id="CHEBI:456216"/>
    </reaction>
</comment>
<comment type="subunit">
    <text evidence="1">Heterotrimer of A, B and C subunits.</text>
</comment>
<comment type="similarity">
    <text evidence="1">Belongs to the GatC family.</text>
</comment>
<name>GATC_RHIE6</name>